<evidence type="ECO:0000250" key="1"/>
<evidence type="ECO:0000255" key="2">
    <source>
        <dbReference type="PROSITE-ProRule" id="PRU01234"/>
    </source>
</evidence>
<evidence type="ECO:0000305" key="3"/>
<keyword id="KW-0963">Cytoplasm</keyword>
<keyword id="KW-1185">Reference proteome</keyword>
<gene>
    <name type="primary">RTC5</name>
    <name type="ordered locus">DEHA2G15092g</name>
</gene>
<accession>Q6BHX4</accession>
<comment type="function">
    <text evidence="1">May be involved in a process influencing telomere capping.</text>
</comment>
<comment type="subcellular location">
    <subcellularLocation>
        <location evidence="1">Cytoplasm</location>
    </subcellularLocation>
</comment>
<comment type="similarity">
    <text evidence="3">Belongs to the RTC5 family.</text>
</comment>
<feature type="chain" id="PRO_0000408824" description="Restriction of telomere capping protein 5">
    <location>
        <begin position="1"/>
        <end position="640"/>
    </location>
</feature>
<feature type="domain" description="TLDc" evidence="2">
    <location>
        <begin position="351"/>
        <end position="587"/>
    </location>
</feature>
<proteinExistence type="inferred from homology"/>
<protein>
    <recommendedName>
        <fullName>Restriction of telomere capping protein 5</fullName>
    </recommendedName>
</protein>
<organism>
    <name type="scientific">Debaryomyces hansenii (strain ATCC 36239 / CBS 767 / BCRC 21394 / JCM 1990 / NBRC 0083 / IGC 2968)</name>
    <name type="common">Yeast</name>
    <name type="synonym">Torulaspora hansenii</name>
    <dbReference type="NCBI Taxonomy" id="284592"/>
    <lineage>
        <taxon>Eukaryota</taxon>
        <taxon>Fungi</taxon>
        <taxon>Dikarya</taxon>
        <taxon>Ascomycota</taxon>
        <taxon>Saccharomycotina</taxon>
        <taxon>Pichiomycetes</taxon>
        <taxon>Debaryomycetaceae</taxon>
        <taxon>Debaryomyces</taxon>
    </lineage>
</organism>
<dbReference type="EMBL" id="CR382139">
    <property type="protein sequence ID" value="CAG90689.2"/>
    <property type="molecule type" value="Genomic_DNA"/>
</dbReference>
<dbReference type="RefSeq" id="XP_462197.2">
    <property type="nucleotide sequence ID" value="XM_462197.1"/>
</dbReference>
<dbReference type="SMR" id="Q6BHX4"/>
<dbReference type="FunCoup" id="Q6BHX4">
    <property type="interactions" value="10"/>
</dbReference>
<dbReference type="STRING" id="284592.Q6BHX4"/>
<dbReference type="GeneID" id="2905117"/>
<dbReference type="KEGG" id="dha:DEHA2G15092g"/>
<dbReference type="VEuPathDB" id="FungiDB:DEHA2G15092g"/>
<dbReference type="eggNOG" id="ENOG502QV3R">
    <property type="taxonomic scope" value="Eukaryota"/>
</dbReference>
<dbReference type="HOGENOM" id="CLU_011918_1_0_1"/>
<dbReference type="InParanoid" id="Q6BHX4"/>
<dbReference type="OMA" id="KWEFEAR"/>
<dbReference type="OrthoDB" id="289228at2759"/>
<dbReference type="Proteomes" id="UP000000599">
    <property type="component" value="Chromosome G"/>
</dbReference>
<dbReference type="GO" id="GO:0005737">
    <property type="term" value="C:cytoplasm"/>
    <property type="evidence" value="ECO:0007669"/>
    <property type="project" value="UniProtKB-SubCell"/>
</dbReference>
<dbReference type="InterPro" id="IPR006571">
    <property type="entry name" value="TLDc_dom"/>
</dbReference>
<dbReference type="Pfam" id="PF07534">
    <property type="entry name" value="TLD"/>
    <property type="match status" value="1"/>
</dbReference>
<dbReference type="SMART" id="SM00584">
    <property type="entry name" value="TLDc"/>
    <property type="match status" value="1"/>
</dbReference>
<dbReference type="PROSITE" id="PS51886">
    <property type="entry name" value="TLDC"/>
    <property type="match status" value="1"/>
</dbReference>
<name>RTC5_DEBHA</name>
<reference key="1">
    <citation type="journal article" date="2004" name="Nature">
        <title>Genome evolution in yeasts.</title>
        <authorList>
            <person name="Dujon B."/>
            <person name="Sherman D."/>
            <person name="Fischer G."/>
            <person name="Durrens P."/>
            <person name="Casaregola S."/>
            <person name="Lafontaine I."/>
            <person name="de Montigny J."/>
            <person name="Marck C."/>
            <person name="Neuveglise C."/>
            <person name="Talla E."/>
            <person name="Goffard N."/>
            <person name="Frangeul L."/>
            <person name="Aigle M."/>
            <person name="Anthouard V."/>
            <person name="Babour A."/>
            <person name="Barbe V."/>
            <person name="Barnay S."/>
            <person name="Blanchin S."/>
            <person name="Beckerich J.-M."/>
            <person name="Beyne E."/>
            <person name="Bleykasten C."/>
            <person name="Boisrame A."/>
            <person name="Boyer J."/>
            <person name="Cattolico L."/>
            <person name="Confanioleri F."/>
            <person name="de Daruvar A."/>
            <person name="Despons L."/>
            <person name="Fabre E."/>
            <person name="Fairhead C."/>
            <person name="Ferry-Dumazet H."/>
            <person name="Groppi A."/>
            <person name="Hantraye F."/>
            <person name="Hennequin C."/>
            <person name="Jauniaux N."/>
            <person name="Joyet P."/>
            <person name="Kachouri R."/>
            <person name="Kerrest A."/>
            <person name="Koszul R."/>
            <person name="Lemaire M."/>
            <person name="Lesur I."/>
            <person name="Ma L."/>
            <person name="Muller H."/>
            <person name="Nicaud J.-M."/>
            <person name="Nikolski M."/>
            <person name="Oztas S."/>
            <person name="Ozier-Kalogeropoulos O."/>
            <person name="Pellenz S."/>
            <person name="Potier S."/>
            <person name="Richard G.-F."/>
            <person name="Straub M.-L."/>
            <person name="Suleau A."/>
            <person name="Swennen D."/>
            <person name="Tekaia F."/>
            <person name="Wesolowski-Louvel M."/>
            <person name="Westhof E."/>
            <person name="Wirth B."/>
            <person name="Zeniou-Meyer M."/>
            <person name="Zivanovic Y."/>
            <person name="Bolotin-Fukuhara M."/>
            <person name="Thierry A."/>
            <person name="Bouchier C."/>
            <person name="Caudron B."/>
            <person name="Scarpelli C."/>
            <person name="Gaillardin C."/>
            <person name="Weissenbach J."/>
            <person name="Wincker P."/>
            <person name="Souciet J.-L."/>
        </authorList>
    </citation>
    <scope>NUCLEOTIDE SEQUENCE [LARGE SCALE GENOMIC DNA]</scope>
    <source>
        <strain>ATCC 36239 / CBS 767 / BCRC 21394 / JCM 1990 / NBRC 0083 / IGC 2968</strain>
    </source>
</reference>
<sequence>MGQVLSKDNEDEANLNVTQKQFTKDKVLEYFNIQNHLQFRPVEIRAITSKLGIKNIKEKSDVTLNDLIYLLKIIKDEDIEGIDHNIKHVLNILSNSFTVIGNFPFLQSETTPKLSIESLMKSALFHTGRYKRLLTAEYDYLKLVFISLSGINKTYLEEKTSSSPSSSDDKEDTLYNLDVMGFSSEDEDSILSRKIKWNTFNVIQSFDDIDLDSIYVGAYDLLKLLTFFLILSSVPEMSHTQMQDHLSKSIARWSEFETYCLSIIRYINLDINVKNIKSTKISYEEFKRGISNGFPLFFSNAWMKIFKNGILSSISTTDVANSNNAPGSHGDANDNEVPKVHKKTPNFVESKLINDASISVISMCLKNMKSNLSITTQNLIKLYAGSESGFSIRSLESKIFKWQAPTLLLVSGKRVKNKTMKHNNRYIQFNEMYPSYFRSSESPKKDWQDDNDKMTYAVIINSPWKNSNKNNFGDEDTVILNLSPRFDFYKSVHNPVLNGKSIYFNNLGMGLGFGNSQPINKNTVKKFLPGDISLTIEANLEFAIFRHISSPNSNGASFFQKSKQNEISVQDFEDRFMISDLEVWGIGSTKELEEQRKQWAWEEKQAEARQSVNLRGLGEERAFLEMVGLVGNHSANGGSM</sequence>